<feature type="signal peptide" evidence="1">
    <location>
        <begin position="1"/>
        <end position="23"/>
    </location>
</feature>
<feature type="chain" id="PRO_0000020403" description="Membrane protein insertase YidC 2">
    <location>
        <begin position="24"/>
        <end position="310"/>
    </location>
</feature>
<feature type="transmembrane region" description="Helical" evidence="1">
    <location>
        <begin position="33"/>
        <end position="53"/>
    </location>
</feature>
<feature type="transmembrane region" description="Helical" evidence="1">
    <location>
        <begin position="58"/>
        <end position="78"/>
    </location>
</feature>
<feature type="transmembrane region" description="Helical" evidence="1">
    <location>
        <begin position="135"/>
        <end position="155"/>
    </location>
</feature>
<feature type="transmembrane region" description="Helical" evidence="1">
    <location>
        <begin position="180"/>
        <end position="200"/>
    </location>
</feature>
<feature type="transmembrane region" description="Helical" evidence="1">
    <location>
        <begin position="219"/>
        <end position="239"/>
    </location>
</feature>
<feature type="region of interest" description="Disordered" evidence="2">
    <location>
        <begin position="266"/>
        <end position="310"/>
    </location>
</feature>
<feature type="compositionally biased region" description="Polar residues" evidence="2">
    <location>
        <begin position="281"/>
        <end position="297"/>
    </location>
</feature>
<feature type="compositionally biased region" description="Basic residues" evidence="2">
    <location>
        <begin position="298"/>
        <end position="310"/>
    </location>
</feature>
<feature type="lipid moiety-binding region" description="N-palmitoyl cysteine" evidence="1">
    <location>
        <position position="24"/>
    </location>
</feature>
<feature type="lipid moiety-binding region" description="S-diacylglycerol cysteine" evidence="1">
    <location>
        <position position="24"/>
    </location>
</feature>
<proteinExistence type="inferred from homology"/>
<sequence>MKKTLKRILFSSLSLSMLLLLTGCVSVDKAGKPYGVIWNTLGVPMANLITYFAQHQGLGFGVAIIIVTVIVRVVILPLGLYQSWKASYQAEKMAYFKPLFEPINERLRNAKTQEEKLAAQTELMTAQRENGLSMFGGIGCLPLLIQMPFFSAIFFAARYTPGVSSATFLGLNLGQKSLTLTVIIAILYFVQSWLSMQGVPDEQRQQMKTMMYLMPIMMVFMSISLPASVALYWFIGGIFSIIQQLVTTYVLKPKLRRKVEEEYTKNPPKAYKANNARKDVTNSTKATESNQAIITSKKTNRNAGKQKRRG</sequence>
<comment type="function">
    <text evidence="1">Required for the insertion and/or proper folding and/or complex formation of integral membrane proteins into the membrane. Involved in integration of membrane proteins that insert both dependently and independently of the Sec translocase complex, as well as at least some lipoproteins.</text>
</comment>
<comment type="subcellular location">
    <subcellularLocation>
        <location evidence="1">Cell membrane</location>
        <topology evidence="1">Multi-pass membrane protein</topology>
    </subcellularLocation>
</comment>
<comment type="similarity">
    <text evidence="1">Belongs to the OXA1/ALB3/YidC family. Type 2 subfamily.</text>
</comment>
<gene>
    <name evidence="1" type="primary">yidC2</name>
    <name type="ordered locus">SAG1608</name>
</gene>
<organism>
    <name type="scientific">Streptococcus agalactiae serotype V (strain ATCC BAA-611 / 2603 V/R)</name>
    <dbReference type="NCBI Taxonomy" id="208435"/>
    <lineage>
        <taxon>Bacteria</taxon>
        <taxon>Bacillati</taxon>
        <taxon>Bacillota</taxon>
        <taxon>Bacilli</taxon>
        <taxon>Lactobacillales</taxon>
        <taxon>Streptococcaceae</taxon>
        <taxon>Streptococcus</taxon>
    </lineage>
</organism>
<name>YIDC2_STRA5</name>
<keyword id="KW-1003">Cell membrane</keyword>
<keyword id="KW-0143">Chaperone</keyword>
<keyword id="KW-0449">Lipoprotein</keyword>
<keyword id="KW-0472">Membrane</keyword>
<keyword id="KW-0564">Palmitate</keyword>
<keyword id="KW-0653">Protein transport</keyword>
<keyword id="KW-1185">Reference proteome</keyword>
<keyword id="KW-0732">Signal</keyword>
<keyword id="KW-0812">Transmembrane</keyword>
<keyword id="KW-1133">Transmembrane helix</keyword>
<keyword id="KW-0813">Transport</keyword>
<protein>
    <recommendedName>
        <fullName evidence="1">Membrane protein insertase YidC 2</fullName>
    </recommendedName>
    <alternativeName>
        <fullName evidence="1">Foldase YidC 2</fullName>
    </alternativeName>
    <alternativeName>
        <fullName evidence="1">Membrane integrase YidC 2</fullName>
    </alternativeName>
    <alternativeName>
        <fullName evidence="1">Membrane protein YidC 2</fullName>
    </alternativeName>
</protein>
<accession>Q8DY84</accession>
<reference key="1">
    <citation type="journal article" date="2002" name="Proc. Natl. Acad. Sci. U.S.A.">
        <title>Complete genome sequence and comparative genomic analysis of an emerging human pathogen, serotype V Streptococcus agalactiae.</title>
        <authorList>
            <person name="Tettelin H."/>
            <person name="Masignani V."/>
            <person name="Cieslewicz M.J."/>
            <person name="Eisen J.A."/>
            <person name="Peterson S.N."/>
            <person name="Wessels M.R."/>
            <person name="Paulsen I.T."/>
            <person name="Nelson K.E."/>
            <person name="Margarit I."/>
            <person name="Read T.D."/>
            <person name="Madoff L.C."/>
            <person name="Wolf A.M."/>
            <person name="Beanan M.J."/>
            <person name="Brinkac L.M."/>
            <person name="Daugherty S.C."/>
            <person name="DeBoy R.T."/>
            <person name="Durkin A.S."/>
            <person name="Kolonay J.F."/>
            <person name="Madupu R."/>
            <person name="Lewis M.R."/>
            <person name="Radune D."/>
            <person name="Fedorova N.B."/>
            <person name="Scanlan D."/>
            <person name="Khouri H.M."/>
            <person name="Mulligan S."/>
            <person name="Carty H.A."/>
            <person name="Cline R.T."/>
            <person name="Van Aken S.E."/>
            <person name="Gill J."/>
            <person name="Scarselli M."/>
            <person name="Mora M."/>
            <person name="Iacobini E.T."/>
            <person name="Brettoni C."/>
            <person name="Galli G."/>
            <person name="Mariani M."/>
            <person name="Vegni F."/>
            <person name="Maione D."/>
            <person name="Rinaudo D."/>
            <person name="Rappuoli R."/>
            <person name="Telford J.L."/>
            <person name="Kasper D.L."/>
            <person name="Grandi G."/>
            <person name="Fraser C.M."/>
        </authorList>
    </citation>
    <scope>NUCLEOTIDE SEQUENCE [LARGE SCALE GENOMIC DNA]</scope>
    <source>
        <strain>ATCC BAA-611 / 2603 V/R</strain>
    </source>
</reference>
<dbReference type="EMBL" id="AE009948">
    <property type="protein sequence ID" value="AAN00472.1"/>
    <property type="molecule type" value="Genomic_DNA"/>
</dbReference>
<dbReference type="RefSeq" id="NP_688599.1">
    <property type="nucleotide sequence ID" value="NC_004116.1"/>
</dbReference>
<dbReference type="SMR" id="Q8DY84"/>
<dbReference type="STRING" id="208435.SAG1608"/>
<dbReference type="KEGG" id="sag:SAG1608"/>
<dbReference type="PATRIC" id="fig|208435.3.peg.1618"/>
<dbReference type="HOGENOM" id="CLU_036138_5_1_9"/>
<dbReference type="OrthoDB" id="9780552at2"/>
<dbReference type="Proteomes" id="UP000000821">
    <property type="component" value="Chromosome"/>
</dbReference>
<dbReference type="GO" id="GO:0005886">
    <property type="term" value="C:plasma membrane"/>
    <property type="evidence" value="ECO:0007669"/>
    <property type="project" value="UniProtKB-SubCell"/>
</dbReference>
<dbReference type="GO" id="GO:0032977">
    <property type="term" value="F:membrane insertase activity"/>
    <property type="evidence" value="ECO:0007669"/>
    <property type="project" value="InterPro"/>
</dbReference>
<dbReference type="GO" id="GO:0051205">
    <property type="term" value="P:protein insertion into membrane"/>
    <property type="evidence" value="ECO:0007669"/>
    <property type="project" value="TreeGrafter"/>
</dbReference>
<dbReference type="GO" id="GO:0015031">
    <property type="term" value="P:protein transport"/>
    <property type="evidence" value="ECO:0007669"/>
    <property type="project" value="UniProtKB-KW"/>
</dbReference>
<dbReference type="CDD" id="cd20070">
    <property type="entry name" value="5TM_YidC_Alb3"/>
    <property type="match status" value="1"/>
</dbReference>
<dbReference type="HAMAP" id="MF_01811">
    <property type="entry name" value="YidC_type2"/>
    <property type="match status" value="1"/>
</dbReference>
<dbReference type="InterPro" id="IPR001708">
    <property type="entry name" value="YidC/ALB3/OXA1/COX18"/>
</dbReference>
<dbReference type="InterPro" id="IPR028055">
    <property type="entry name" value="YidC/Oxa/ALB_C"/>
</dbReference>
<dbReference type="InterPro" id="IPR023060">
    <property type="entry name" value="YidC/YidC1/YidC2_Firmicutes"/>
</dbReference>
<dbReference type="InterPro" id="IPR047196">
    <property type="entry name" value="YidC_ALB_C"/>
</dbReference>
<dbReference type="NCBIfam" id="NF002687">
    <property type="entry name" value="PRK02463.1"/>
    <property type="match status" value="1"/>
</dbReference>
<dbReference type="NCBIfam" id="TIGR03592">
    <property type="entry name" value="yidC_oxa1_cterm"/>
    <property type="match status" value="1"/>
</dbReference>
<dbReference type="PANTHER" id="PTHR12428:SF65">
    <property type="entry name" value="CYTOCHROME C OXIDASE ASSEMBLY PROTEIN COX18, MITOCHONDRIAL"/>
    <property type="match status" value="1"/>
</dbReference>
<dbReference type="PANTHER" id="PTHR12428">
    <property type="entry name" value="OXA1"/>
    <property type="match status" value="1"/>
</dbReference>
<dbReference type="Pfam" id="PF02096">
    <property type="entry name" value="60KD_IMP"/>
    <property type="match status" value="1"/>
</dbReference>
<dbReference type="PROSITE" id="PS51257">
    <property type="entry name" value="PROKAR_LIPOPROTEIN"/>
    <property type="match status" value="1"/>
</dbReference>
<evidence type="ECO:0000255" key="1">
    <source>
        <dbReference type="HAMAP-Rule" id="MF_01811"/>
    </source>
</evidence>
<evidence type="ECO:0000256" key="2">
    <source>
        <dbReference type="SAM" id="MobiDB-lite"/>
    </source>
</evidence>